<gene>
    <name type="ORF">DDB_G0271806</name>
</gene>
<keyword id="KW-0343">GTPase activation</keyword>
<keyword id="KW-1185">Reference proteome</keyword>
<keyword id="KW-0677">Repeat</keyword>
<accession>Q55AN8</accession>
<accession>Q86HH0</accession>
<name>Y1806_DICDI</name>
<organism>
    <name type="scientific">Dictyostelium discoideum</name>
    <name type="common">Social amoeba</name>
    <dbReference type="NCBI Taxonomy" id="44689"/>
    <lineage>
        <taxon>Eukaryota</taxon>
        <taxon>Amoebozoa</taxon>
        <taxon>Evosea</taxon>
        <taxon>Eumycetozoa</taxon>
        <taxon>Dictyostelia</taxon>
        <taxon>Dictyosteliales</taxon>
        <taxon>Dictyosteliaceae</taxon>
        <taxon>Dictyostelium</taxon>
    </lineage>
</organism>
<dbReference type="EMBL" id="AAFI02000006">
    <property type="protein sequence ID" value="EAL71593.1"/>
    <property type="molecule type" value="Genomic_DNA"/>
</dbReference>
<dbReference type="RefSeq" id="XP_645484.1">
    <property type="nucleotide sequence ID" value="XM_640392.1"/>
</dbReference>
<dbReference type="SMR" id="Q55AN8"/>
<dbReference type="FunCoup" id="Q55AN8">
    <property type="interactions" value="513"/>
</dbReference>
<dbReference type="STRING" id="44689.Q55AN8"/>
<dbReference type="GlyGen" id="Q55AN8">
    <property type="glycosylation" value="2 sites"/>
</dbReference>
<dbReference type="PaxDb" id="44689-DDB0229869"/>
<dbReference type="EnsemblProtists" id="EAL71593">
    <property type="protein sequence ID" value="EAL71593"/>
    <property type="gene ID" value="DDB_G0271806"/>
</dbReference>
<dbReference type="GeneID" id="8618112"/>
<dbReference type="KEGG" id="ddi:DDB_G0271806"/>
<dbReference type="dictyBase" id="DDB_G0271806">
    <property type="gene designation" value="rapgap3"/>
</dbReference>
<dbReference type="VEuPathDB" id="AmoebaDB:DDB_G0271806"/>
<dbReference type="eggNOG" id="KOG3686">
    <property type="taxonomic scope" value="Eukaryota"/>
</dbReference>
<dbReference type="HOGENOM" id="CLU_274579_0_0_1"/>
<dbReference type="InParanoid" id="Q55AN8"/>
<dbReference type="OMA" id="QVGNDIC"/>
<dbReference type="Reactome" id="R-DDI-392517">
    <property type="pathway name" value="Rap1 signalling"/>
</dbReference>
<dbReference type="PRO" id="PR:Q55AN8"/>
<dbReference type="Proteomes" id="UP000002195">
    <property type="component" value="Chromosome 2"/>
</dbReference>
<dbReference type="GO" id="GO:0005938">
    <property type="term" value="C:cell cortex"/>
    <property type="evidence" value="ECO:0000314"/>
    <property type="project" value="dictyBase"/>
</dbReference>
<dbReference type="GO" id="GO:0031252">
    <property type="term" value="C:cell leading edge"/>
    <property type="evidence" value="ECO:0000314"/>
    <property type="project" value="dictyBase"/>
</dbReference>
<dbReference type="GO" id="GO:0031254">
    <property type="term" value="C:cell trailing edge"/>
    <property type="evidence" value="ECO:0000314"/>
    <property type="project" value="dictyBase"/>
</dbReference>
<dbReference type="GO" id="GO:0070685">
    <property type="term" value="C:macropinocytic cup"/>
    <property type="evidence" value="ECO:0000314"/>
    <property type="project" value="dictyBase"/>
</dbReference>
<dbReference type="GO" id="GO:0044354">
    <property type="term" value="C:macropinosome"/>
    <property type="evidence" value="ECO:0000314"/>
    <property type="project" value="dictyBase"/>
</dbReference>
<dbReference type="GO" id="GO:0005886">
    <property type="term" value="C:plasma membrane"/>
    <property type="evidence" value="ECO:0000314"/>
    <property type="project" value="dictyBase"/>
</dbReference>
<dbReference type="GO" id="GO:0031143">
    <property type="term" value="C:pseudopodium"/>
    <property type="evidence" value="ECO:0000314"/>
    <property type="project" value="dictyBase"/>
</dbReference>
<dbReference type="GO" id="GO:0005096">
    <property type="term" value="F:GTPase activator activity"/>
    <property type="evidence" value="ECO:0000314"/>
    <property type="project" value="dictyBase"/>
</dbReference>
<dbReference type="GO" id="GO:0005547">
    <property type="term" value="F:phosphatidylinositol-3,4,5-trisphosphate binding"/>
    <property type="evidence" value="ECO:0000314"/>
    <property type="project" value="dictyBase"/>
</dbReference>
<dbReference type="GO" id="GO:0043325">
    <property type="term" value="F:phosphatidylinositol-3,4-bisphosphate binding"/>
    <property type="evidence" value="ECO:0000314"/>
    <property type="project" value="dictyBase"/>
</dbReference>
<dbReference type="GO" id="GO:0048870">
    <property type="term" value="P:cell motility"/>
    <property type="evidence" value="ECO:0000315"/>
    <property type="project" value="dictyBase"/>
</dbReference>
<dbReference type="GO" id="GO:0098609">
    <property type="term" value="P:cell-cell adhesion"/>
    <property type="evidence" value="ECO:0000315"/>
    <property type="project" value="dictyBase"/>
</dbReference>
<dbReference type="GO" id="GO:0043327">
    <property type="term" value="P:chemotaxis to cAMP"/>
    <property type="evidence" value="ECO:0000314"/>
    <property type="project" value="dictyBase"/>
</dbReference>
<dbReference type="GO" id="GO:0032486">
    <property type="term" value="P:Rap protein signal transduction"/>
    <property type="evidence" value="ECO:0000315"/>
    <property type="project" value="dictyBase"/>
</dbReference>
<dbReference type="GO" id="GO:0032487">
    <property type="term" value="P:regulation of Rap protein signal transduction"/>
    <property type="evidence" value="ECO:0000315"/>
    <property type="project" value="dictyBase"/>
</dbReference>
<dbReference type="GO" id="GO:0051056">
    <property type="term" value="P:regulation of small GTPase mediated signal transduction"/>
    <property type="evidence" value="ECO:0000315"/>
    <property type="project" value="dictyBase"/>
</dbReference>
<dbReference type="GO" id="GO:1903013">
    <property type="term" value="P:response to differentiation-inducing factor 1"/>
    <property type="evidence" value="ECO:0007005"/>
    <property type="project" value="dictyBase"/>
</dbReference>
<dbReference type="GO" id="GO:0030587">
    <property type="term" value="P:sorocarp development"/>
    <property type="evidence" value="ECO:0000314"/>
    <property type="project" value="dictyBase"/>
</dbReference>
<dbReference type="GO" id="GO:0031149">
    <property type="term" value="P:sorocarp stalk cell differentiation"/>
    <property type="evidence" value="ECO:0000315"/>
    <property type="project" value="dictyBase"/>
</dbReference>
<dbReference type="FunFam" id="2.30.29.30:FF:000711">
    <property type="entry name" value="PH and Rap-GAP domain-containing protein DDB_G0271806"/>
    <property type="match status" value="1"/>
</dbReference>
<dbReference type="Gene3D" id="2.30.29.30">
    <property type="entry name" value="Pleckstrin-homology domain (PH domain)/Phosphotyrosine-binding domain (PTB)"/>
    <property type="match status" value="3"/>
</dbReference>
<dbReference type="Gene3D" id="3.40.50.11210">
    <property type="entry name" value="Rap/Ran-GAP"/>
    <property type="match status" value="1"/>
</dbReference>
<dbReference type="InterPro" id="IPR011993">
    <property type="entry name" value="PH-like_dom_sf"/>
</dbReference>
<dbReference type="InterPro" id="IPR001849">
    <property type="entry name" value="PH_domain"/>
</dbReference>
<dbReference type="InterPro" id="IPR035974">
    <property type="entry name" value="Rap/Ran-GAP_sf"/>
</dbReference>
<dbReference type="InterPro" id="IPR000331">
    <property type="entry name" value="Rap/Ran_GAP_dom"/>
</dbReference>
<dbReference type="InterPro" id="IPR050989">
    <property type="entry name" value="Rap1_Ran_GAP"/>
</dbReference>
<dbReference type="PANTHER" id="PTHR15711:SF62">
    <property type="entry name" value="GTPASE-ACTIVATING RAP_RAN-GAP DOMAIN-LIKE PROTEIN 3"/>
    <property type="match status" value="1"/>
</dbReference>
<dbReference type="PANTHER" id="PTHR15711">
    <property type="entry name" value="RAP GTPASE-ACTIVATING PROTEIN"/>
    <property type="match status" value="1"/>
</dbReference>
<dbReference type="Pfam" id="PF00169">
    <property type="entry name" value="PH"/>
    <property type="match status" value="2"/>
</dbReference>
<dbReference type="Pfam" id="PF02145">
    <property type="entry name" value="Rap_GAP"/>
    <property type="match status" value="1"/>
</dbReference>
<dbReference type="SMART" id="SM00233">
    <property type="entry name" value="PH"/>
    <property type="match status" value="2"/>
</dbReference>
<dbReference type="SUPFAM" id="SSF50729">
    <property type="entry name" value="PH domain-like"/>
    <property type="match status" value="3"/>
</dbReference>
<dbReference type="SUPFAM" id="SSF111347">
    <property type="entry name" value="Rap/Ran-GAP"/>
    <property type="match status" value="1"/>
</dbReference>
<dbReference type="PROSITE" id="PS50003">
    <property type="entry name" value="PH_DOMAIN"/>
    <property type="match status" value="2"/>
</dbReference>
<dbReference type="PROSITE" id="PS50085">
    <property type="entry name" value="RAPGAP"/>
    <property type="match status" value="1"/>
</dbReference>
<sequence length="1167" mass="130198">MHTGEYSELLIGINGHMKKITLKLKNNLEEDQYSNCVKYGWIEKRCGKNQSFSSWKRMWFILKDSKLTYYIKEKNLKKRSSTIGSTQEFFKQQHGIDNNNCTNSNSNNNNNNSDLIHLSAPSLSSSTSSTISPISSSSSLTTTTTTTTTTTNANTNNGLSDSINHVYLEGELGKKKEGKGWKVRWMKLLEHSLVYYKSSKDKEPLGIVNLNECQDCEVNKESSNKFVVVHSSNRYYFKTNTKQELTQWVKSVKSRIPSINQTKMDLDQFQLKGVIEFNSIQQIAETFKFNSQPNCLTITTDEKAYYLSFDSNKDKLDWLNQLNLTINKFKGGFNSGGGSNNSSPSSLQSQQAKESGNGGSLSPNILGNFKSSIKPWRFSSSPSQGRVSIGGGGDRSSTQVKFVDNPLSKSSNKEEFDGGEYGSQILPRKSTIIGPNGGVKVSTSGAVELSPVLISSNNNNNNTISSSGNSIPTCLSDLINESSDNEDGDDLKMMIPESLKNEMMRRSAISSLKNFKLEIFIWSNHQEVFTFLFSDSVLVDQVKAFAFKKIPSLANLSVLDYRLGIDEDTLLEVEFLKFIYSHTMVELALKTCGIVKIGIFHHRKDRRVKEKLYSDKFYGHLLSQSPDGRKGNGVGIGGNGIPIEYSRSEPNLQSCLSSSPSTRETMVPSSPSSHQLITPPPSLKQYEQQLSSSSSSSSQQLQLQLQQQEQEQLLQEQPEAEQSQPEPQPQLEPESEIEIEELEQPIEELLNISTTPISIRSNSILSSSTSASSSPSSTPSLTPVIERQQKMSAAGWHSVNPSVTLNQRRQLISGCPGWNIEVSNPTSTFTSQGFKPKFDKQEHGFYRRYNFDGTSTVQSFLGVDMKMGPLAFSLAKDANDNYRGVLHTKHGAKTISEDSKNIVGILNLLSLSKKVKTKKVVSHLIGLLDPSIDAKLLNLASNQSELQKELLSFEERQTTSGFKFGMVYCRHGQVTDDEIFSNKQGSPEWDEFLSLIGDKIELVGWPHYSAGLDVKFNSTGTHSLYTDYHGNEVMFHVSTMLPFSTTDYQQIERKRQVGNDICVVIFNDGTLSYMPNTITSQFNHVIILVQYDKQNNGYKVSMACKDGVKSPFEPLSPNNLIKKSDIKDFILTKLINGELASLQAPVFASKITRTRESLLNYYISQFL</sequence>
<proteinExistence type="predicted"/>
<protein>
    <recommendedName>
        <fullName>PH and Rap-GAP domain-containing protein DDB_G0271806</fullName>
    </recommendedName>
</protein>
<reference key="1">
    <citation type="journal article" date="2002" name="Nature">
        <title>Sequence and analysis of chromosome 2 of Dictyostelium discoideum.</title>
        <authorList>
            <person name="Gloeckner G."/>
            <person name="Eichinger L."/>
            <person name="Szafranski K."/>
            <person name="Pachebat J.A."/>
            <person name="Bankier A.T."/>
            <person name="Dear P.H."/>
            <person name="Lehmann R."/>
            <person name="Baumgart C."/>
            <person name="Parra G."/>
            <person name="Abril J.F."/>
            <person name="Guigo R."/>
            <person name="Kumpf K."/>
            <person name="Tunggal B."/>
            <person name="Cox E.C."/>
            <person name="Quail M.A."/>
            <person name="Platzer M."/>
            <person name="Rosenthal A."/>
            <person name="Noegel A.A."/>
        </authorList>
    </citation>
    <scope>NUCLEOTIDE SEQUENCE [LARGE SCALE GENOMIC DNA]</scope>
    <source>
        <strain>AX4</strain>
    </source>
</reference>
<reference key="2">
    <citation type="journal article" date="2005" name="Nature">
        <title>The genome of the social amoeba Dictyostelium discoideum.</title>
        <authorList>
            <person name="Eichinger L."/>
            <person name="Pachebat J.A."/>
            <person name="Gloeckner G."/>
            <person name="Rajandream M.A."/>
            <person name="Sucgang R."/>
            <person name="Berriman M."/>
            <person name="Song J."/>
            <person name="Olsen R."/>
            <person name="Szafranski K."/>
            <person name="Xu Q."/>
            <person name="Tunggal B."/>
            <person name="Kummerfeld S."/>
            <person name="Madera M."/>
            <person name="Konfortov B.A."/>
            <person name="Rivero F."/>
            <person name="Bankier A.T."/>
            <person name="Lehmann R."/>
            <person name="Hamlin N."/>
            <person name="Davies R."/>
            <person name="Gaudet P."/>
            <person name="Fey P."/>
            <person name="Pilcher K."/>
            <person name="Chen G."/>
            <person name="Saunders D."/>
            <person name="Sodergren E.J."/>
            <person name="Davis P."/>
            <person name="Kerhornou A."/>
            <person name="Nie X."/>
            <person name="Hall N."/>
            <person name="Anjard C."/>
            <person name="Hemphill L."/>
            <person name="Bason N."/>
            <person name="Farbrother P."/>
            <person name="Desany B."/>
            <person name="Just E."/>
            <person name="Morio T."/>
            <person name="Rost R."/>
            <person name="Churcher C.M."/>
            <person name="Cooper J."/>
            <person name="Haydock S."/>
            <person name="van Driessche N."/>
            <person name="Cronin A."/>
            <person name="Goodhead I."/>
            <person name="Muzny D.M."/>
            <person name="Mourier T."/>
            <person name="Pain A."/>
            <person name="Lu M."/>
            <person name="Harper D."/>
            <person name="Lindsay R."/>
            <person name="Hauser H."/>
            <person name="James K.D."/>
            <person name="Quiles M."/>
            <person name="Madan Babu M."/>
            <person name="Saito T."/>
            <person name="Buchrieser C."/>
            <person name="Wardroper A."/>
            <person name="Felder M."/>
            <person name="Thangavelu M."/>
            <person name="Johnson D."/>
            <person name="Knights A."/>
            <person name="Loulseged H."/>
            <person name="Mungall K.L."/>
            <person name="Oliver K."/>
            <person name="Price C."/>
            <person name="Quail M.A."/>
            <person name="Urushihara H."/>
            <person name="Hernandez J."/>
            <person name="Rabbinowitsch E."/>
            <person name="Steffen D."/>
            <person name="Sanders M."/>
            <person name="Ma J."/>
            <person name="Kohara Y."/>
            <person name="Sharp S."/>
            <person name="Simmonds M.N."/>
            <person name="Spiegler S."/>
            <person name="Tivey A."/>
            <person name="Sugano S."/>
            <person name="White B."/>
            <person name="Walker D."/>
            <person name="Woodward J.R."/>
            <person name="Winckler T."/>
            <person name="Tanaka Y."/>
            <person name="Shaulsky G."/>
            <person name="Schleicher M."/>
            <person name="Weinstock G.M."/>
            <person name="Rosenthal A."/>
            <person name="Cox E.C."/>
            <person name="Chisholm R.L."/>
            <person name="Gibbs R.A."/>
            <person name="Loomis W.F."/>
            <person name="Platzer M."/>
            <person name="Kay R.R."/>
            <person name="Williams J.G."/>
            <person name="Dear P.H."/>
            <person name="Noegel A.A."/>
            <person name="Barrell B.G."/>
            <person name="Kuspa A."/>
        </authorList>
    </citation>
    <scope>NUCLEOTIDE SEQUENCE [LARGE SCALE GENOMIC DNA]</scope>
    <source>
        <strain>AX4</strain>
    </source>
</reference>
<feature type="chain" id="PRO_0000368232" description="PH and Rap-GAP domain-containing protein DDB_G0271806">
    <location>
        <begin position="1"/>
        <end position="1167"/>
    </location>
</feature>
<feature type="domain" description="PH 1" evidence="1">
    <location>
        <begin position="35"/>
        <end position="140"/>
    </location>
</feature>
<feature type="domain" description="PH 2" evidence="1">
    <location>
        <begin position="165"/>
        <end position="257"/>
    </location>
</feature>
<feature type="domain" description="Rap-GAP" evidence="2">
    <location>
        <begin position="950"/>
        <end position="1162"/>
    </location>
</feature>
<feature type="region of interest" description="Disordered" evidence="3">
    <location>
        <begin position="95"/>
        <end position="160"/>
    </location>
</feature>
<feature type="region of interest" description="Disordered" evidence="3">
    <location>
        <begin position="335"/>
        <end position="361"/>
    </location>
</feature>
<feature type="region of interest" description="Disordered" evidence="3">
    <location>
        <begin position="376"/>
        <end position="400"/>
    </location>
</feature>
<feature type="region of interest" description="Disordered" evidence="3">
    <location>
        <begin position="645"/>
        <end position="734"/>
    </location>
</feature>
<feature type="compositionally biased region" description="Low complexity" evidence="3">
    <location>
        <begin position="98"/>
        <end position="155"/>
    </location>
</feature>
<feature type="compositionally biased region" description="Low complexity" evidence="3">
    <location>
        <begin position="340"/>
        <end position="351"/>
    </location>
</feature>
<feature type="compositionally biased region" description="Polar residues" evidence="3">
    <location>
        <begin position="648"/>
        <end position="676"/>
    </location>
</feature>
<feature type="compositionally biased region" description="Low complexity" evidence="3">
    <location>
        <begin position="687"/>
        <end position="732"/>
    </location>
</feature>
<evidence type="ECO:0000255" key="1">
    <source>
        <dbReference type="PROSITE-ProRule" id="PRU00145"/>
    </source>
</evidence>
<evidence type="ECO:0000255" key="2">
    <source>
        <dbReference type="PROSITE-ProRule" id="PRU00165"/>
    </source>
</evidence>
<evidence type="ECO:0000256" key="3">
    <source>
        <dbReference type="SAM" id="MobiDB-lite"/>
    </source>
</evidence>